<gene>
    <name type="primary">slx1</name>
    <name type="ORF">PMAA_082160</name>
</gene>
<accession>B6QFH5</accession>
<evidence type="ECO:0000255" key="1">
    <source>
        <dbReference type="HAMAP-Rule" id="MF_03100"/>
    </source>
</evidence>
<evidence type="ECO:0000256" key="2">
    <source>
        <dbReference type="SAM" id="MobiDB-lite"/>
    </source>
</evidence>
<protein>
    <recommendedName>
        <fullName evidence="1">Structure-specific endonuclease subunit slx1</fullName>
        <ecNumber evidence="1">3.1.-.-</ecNumber>
    </recommendedName>
</protein>
<keyword id="KW-0227">DNA damage</keyword>
<keyword id="KW-0233">DNA recombination</keyword>
<keyword id="KW-0234">DNA repair</keyword>
<keyword id="KW-0255">Endonuclease</keyword>
<keyword id="KW-0378">Hydrolase</keyword>
<keyword id="KW-0479">Metal-binding</keyword>
<keyword id="KW-0540">Nuclease</keyword>
<keyword id="KW-0539">Nucleus</keyword>
<keyword id="KW-1185">Reference proteome</keyword>
<keyword id="KW-0862">Zinc</keyword>
<keyword id="KW-0863">Zinc-finger</keyword>
<proteinExistence type="inferred from homology"/>
<comment type="function">
    <text evidence="1">Catalytic subunit of the slx1-slx4 structure-specific endonuclease that resolves DNA secondary structures generated during DNA repair and recombination. Has endonuclease activity towards branched DNA substrates, introducing single-strand cuts in duplex DNA close to junctions with ss-DNA.</text>
</comment>
<comment type="cofactor">
    <cofactor evidence="1">
        <name>a divalent metal cation</name>
        <dbReference type="ChEBI" id="CHEBI:60240"/>
    </cofactor>
</comment>
<comment type="subunit">
    <text evidence="1">Forms a heterodimer with slx4.</text>
</comment>
<comment type="subcellular location">
    <subcellularLocation>
        <location evidence="1">Nucleus</location>
    </subcellularLocation>
</comment>
<comment type="similarity">
    <text evidence="1">Belongs to the SLX1 family.</text>
</comment>
<reference key="1">
    <citation type="journal article" date="2015" name="Genome Announc.">
        <title>Genome sequence of the AIDS-associated pathogen Penicillium marneffei (ATCC18224) and its near taxonomic relative Talaromyces stipitatus (ATCC10500).</title>
        <authorList>
            <person name="Nierman W.C."/>
            <person name="Fedorova-Abrams N.D."/>
            <person name="Andrianopoulos A."/>
        </authorList>
    </citation>
    <scope>NUCLEOTIDE SEQUENCE [LARGE SCALE GENOMIC DNA]</scope>
    <source>
        <strain>ATCC 18224 / CBS 334.59 / QM 7333</strain>
    </source>
</reference>
<sequence>MISTAPADLPSPKPIPAFYCCYLLRSVKKPSSLYIGSTPDPARRLEQHNGFTKGGAKRTERDTLRPWEMITIIEGFTSRTGALQFEWSWQHVHTTRHIGAVETDQLNRRRKDPPVDQGSGIWTSTPKVLGNLHQLLRSTYFGTWPLTVRFLSTEAHSHWQRWTERADGLLPDTIHVELDFHAEGASVLDSNLPANDMTHINATYSGIQDHLEKSASLLNDSAKTLACEVCKKLLSPHGDVIVVCSQPHCHAVSHVKCLSQLFLRDEGSSGLVPTLGDCPACKREVTWVALMKELSMRLHGAKIATKLLKKERKSKAISDSRKSSKSGKKTANTYADILGNDYDDLDEDWMNSVNVDSGSEPLDHKFTNANNSTGRVEIVIEDSEEETFD</sequence>
<dbReference type="EC" id="3.1.-.-" evidence="1"/>
<dbReference type="EMBL" id="DS995901">
    <property type="protein sequence ID" value="EEA24210.1"/>
    <property type="molecule type" value="Genomic_DNA"/>
</dbReference>
<dbReference type="RefSeq" id="XP_002147721.1">
    <property type="nucleotide sequence ID" value="XM_002147685.1"/>
</dbReference>
<dbReference type="SMR" id="B6QFH5"/>
<dbReference type="STRING" id="441960.B6QFH5"/>
<dbReference type="VEuPathDB" id="FungiDB:PMAA_082160"/>
<dbReference type="HOGENOM" id="CLU_030739_1_0_1"/>
<dbReference type="OrthoDB" id="12757at28568"/>
<dbReference type="PhylomeDB" id="B6QFH5"/>
<dbReference type="Proteomes" id="UP000001294">
    <property type="component" value="Unassembled WGS sequence"/>
</dbReference>
<dbReference type="GO" id="GO:0033557">
    <property type="term" value="C:Slx1-Slx4 complex"/>
    <property type="evidence" value="ECO:0007669"/>
    <property type="project" value="UniProtKB-UniRule"/>
</dbReference>
<dbReference type="GO" id="GO:0017108">
    <property type="term" value="F:5'-flap endonuclease activity"/>
    <property type="evidence" value="ECO:0007669"/>
    <property type="project" value="InterPro"/>
</dbReference>
<dbReference type="GO" id="GO:0008821">
    <property type="term" value="F:crossover junction DNA endonuclease activity"/>
    <property type="evidence" value="ECO:0007669"/>
    <property type="project" value="TreeGrafter"/>
</dbReference>
<dbReference type="GO" id="GO:0008270">
    <property type="term" value="F:zinc ion binding"/>
    <property type="evidence" value="ECO:0007669"/>
    <property type="project" value="UniProtKB-KW"/>
</dbReference>
<dbReference type="GO" id="GO:0000724">
    <property type="term" value="P:double-strand break repair via homologous recombination"/>
    <property type="evidence" value="ECO:0007669"/>
    <property type="project" value="TreeGrafter"/>
</dbReference>
<dbReference type="CDD" id="cd10455">
    <property type="entry name" value="GIY-YIG_SLX1"/>
    <property type="match status" value="1"/>
</dbReference>
<dbReference type="FunFam" id="3.40.1440.10:FF:000006">
    <property type="entry name" value="Structure-specific endonuclease subunit SLX1"/>
    <property type="match status" value="1"/>
</dbReference>
<dbReference type="Gene3D" id="3.40.1440.10">
    <property type="entry name" value="GIY-YIG endonuclease"/>
    <property type="match status" value="1"/>
</dbReference>
<dbReference type="Gene3D" id="3.30.40.10">
    <property type="entry name" value="Zinc/RING finger domain, C3HC4 (zinc finger)"/>
    <property type="match status" value="1"/>
</dbReference>
<dbReference type="HAMAP" id="MF_03100">
    <property type="entry name" value="Endonuc_su_Slx1"/>
    <property type="match status" value="1"/>
</dbReference>
<dbReference type="InterPro" id="IPR000305">
    <property type="entry name" value="GIY-YIG_endonuc"/>
</dbReference>
<dbReference type="InterPro" id="IPR035901">
    <property type="entry name" value="GIY-YIG_endonuc_sf"/>
</dbReference>
<dbReference type="InterPro" id="IPR027520">
    <property type="entry name" value="Slx1"/>
</dbReference>
<dbReference type="InterPro" id="IPR048749">
    <property type="entry name" value="SLX1_C"/>
</dbReference>
<dbReference type="InterPro" id="IPR050381">
    <property type="entry name" value="SLX1_endonuclease"/>
</dbReference>
<dbReference type="InterPro" id="IPR013083">
    <property type="entry name" value="Znf_RING/FYVE/PHD"/>
</dbReference>
<dbReference type="PANTHER" id="PTHR20208">
    <property type="entry name" value="STRUCTURE-SPECIFIC ENDONUCLEASE SUBUNIT SLX1"/>
    <property type="match status" value="1"/>
</dbReference>
<dbReference type="PANTHER" id="PTHR20208:SF10">
    <property type="entry name" value="STRUCTURE-SPECIFIC ENDONUCLEASE SUBUNIT SLX1"/>
    <property type="match status" value="1"/>
</dbReference>
<dbReference type="Pfam" id="PF01541">
    <property type="entry name" value="GIY-YIG"/>
    <property type="match status" value="1"/>
</dbReference>
<dbReference type="Pfam" id="PF21202">
    <property type="entry name" value="SLX1_C"/>
    <property type="match status" value="1"/>
</dbReference>
<dbReference type="SUPFAM" id="SSF82771">
    <property type="entry name" value="GIY-YIG endonuclease"/>
    <property type="match status" value="1"/>
</dbReference>
<dbReference type="PROSITE" id="PS50164">
    <property type="entry name" value="GIY_YIG"/>
    <property type="match status" value="1"/>
</dbReference>
<organism>
    <name type="scientific">Talaromyces marneffei (strain ATCC 18224 / CBS 334.59 / QM 7333)</name>
    <name type="common">Penicillium marneffei</name>
    <dbReference type="NCBI Taxonomy" id="441960"/>
    <lineage>
        <taxon>Eukaryota</taxon>
        <taxon>Fungi</taxon>
        <taxon>Dikarya</taxon>
        <taxon>Ascomycota</taxon>
        <taxon>Pezizomycotina</taxon>
        <taxon>Eurotiomycetes</taxon>
        <taxon>Eurotiomycetidae</taxon>
        <taxon>Eurotiales</taxon>
        <taxon>Trichocomaceae</taxon>
        <taxon>Talaromyces</taxon>
        <taxon>Talaromyces sect. Talaromyces</taxon>
    </lineage>
</organism>
<feature type="chain" id="PRO_0000383793" description="Structure-specific endonuclease subunit slx1">
    <location>
        <begin position="1"/>
        <end position="389"/>
    </location>
</feature>
<feature type="domain" description="GIY-YIG" evidence="1">
    <location>
        <begin position="17"/>
        <end position="99"/>
    </location>
</feature>
<feature type="zinc finger region" description="SLX1-type" evidence="1">
    <location>
        <begin position="227"/>
        <end position="281"/>
    </location>
</feature>
<feature type="region of interest" description="Disordered" evidence="2">
    <location>
        <begin position="38"/>
        <end position="59"/>
    </location>
</feature>
<name>SLX1_TALMQ</name>